<organism>
    <name type="scientific">Bilophila wadsworthia (strain 3_1_6)</name>
    <dbReference type="NCBI Taxonomy" id="563192"/>
    <lineage>
        <taxon>Bacteria</taxon>
        <taxon>Pseudomonadati</taxon>
        <taxon>Thermodesulfobacteriota</taxon>
        <taxon>Desulfovibrionia</taxon>
        <taxon>Desulfovibrionales</taxon>
        <taxon>Desulfovibrionaceae</taxon>
        <taxon>Bilophila</taxon>
    </lineage>
</organism>
<dbReference type="EC" id="1.2.1.10" evidence="1"/>
<dbReference type="EMBL" id="ADCP02000001">
    <property type="protein sequence ID" value="EFV45545.1"/>
    <property type="molecule type" value="Genomic_DNA"/>
</dbReference>
<dbReference type="SMR" id="E5Y379"/>
<dbReference type="STRING" id="563192.HMPREF0179_00640"/>
<dbReference type="eggNOG" id="COG1012">
    <property type="taxonomic scope" value="Bacteria"/>
</dbReference>
<dbReference type="HOGENOM" id="CLU_028794_1_0_7"/>
<dbReference type="OrthoDB" id="9815791at2"/>
<dbReference type="BioCyc" id="MetaCyc:MONOMER-20853"/>
<dbReference type="UniPathway" id="UPA00338"/>
<dbReference type="Proteomes" id="UP000006034">
    <property type="component" value="Unassembled WGS sequence"/>
</dbReference>
<dbReference type="GO" id="GO:0008774">
    <property type="term" value="F:acetaldehyde dehydrogenase (acetylating) activity"/>
    <property type="evidence" value="ECO:0007669"/>
    <property type="project" value="UniProtKB-EC"/>
</dbReference>
<dbReference type="GO" id="GO:0046306">
    <property type="term" value="P:alkanesulfonate catabolic process"/>
    <property type="evidence" value="ECO:0007669"/>
    <property type="project" value="UniProtKB-UniPathway"/>
</dbReference>
<dbReference type="CDD" id="cd07121">
    <property type="entry name" value="ALDH_EutE"/>
    <property type="match status" value="1"/>
</dbReference>
<dbReference type="Gene3D" id="3.40.605.10">
    <property type="entry name" value="Aldehyde Dehydrogenase, Chain A, domain 1"/>
    <property type="match status" value="1"/>
</dbReference>
<dbReference type="Gene3D" id="3.40.309.10">
    <property type="entry name" value="Aldehyde Dehydrogenase, Chain A, domain 2"/>
    <property type="match status" value="1"/>
</dbReference>
<dbReference type="InterPro" id="IPR012408">
    <property type="entry name" value="Acetald_propionald_DH-rel"/>
</dbReference>
<dbReference type="InterPro" id="IPR016161">
    <property type="entry name" value="Ald_DH/histidinol_DH"/>
</dbReference>
<dbReference type="InterPro" id="IPR016163">
    <property type="entry name" value="Ald_DH_C"/>
</dbReference>
<dbReference type="InterPro" id="IPR016162">
    <property type="entry name" value="Ald_DH_N"/>
</dbReference>
<dbReference type="InterPro" id="IPR015590">
    <property type="entry name" value="Aldehyde_DH_dom"/>
</dbReference>
<dbReference type="NCBIfam" id="NF011927">
    <property type="entry name" value="PRK15398.1"/>
    <property type="match status" value="1"/>
</dbReference>
<dbReference type="PANTHER" id="PTHR11699">
    <property type="entry name" value="ALDEHYDE DEHYDROGENASE-RELATED"/>
    <property type="match status" value="1"/>
</dbReference>
<dbReference type="Pfam" id="PF00171">
    <property type="entry name" value="Aldedh"/>
    <property type="match status" value="1"/>
</dbReference>
<dbReference type="PIRSF" id="PIRSF036410">
    <property type="entry name" value="EutE_PduP"/>
    <property type="match status" value="1"/>
</dbReference>
<dbReference type="SUPFAM" id="SSF53720">
    <property type="entry name" value="ALDH-like"/>
    <property type="match status" value="1"/>
</dbReference>
<keyword id="KW-0520">NAD</keyword>
<keyword id="KW-0560">Oxidoreductase</keyword>
<keyword id="KW-1185">Reference proteome</keyword>
<sequence>MDVRQQDVERIVVEVLKKMMSDQPTAAATTVVAASGCDCGDFGLFDRLEDAVQAAEAAQKKISTVAMRDKIIAAIRKAGLENAKAFAEIAHNETGMGRVSDKIAKNILVCERTPGTECLSPMAISGDMGLTLIENAPWGVIASVTPSTNPTATVINNAISMIAGGNSVIFAPHPNAKRASQTAIQVLNKAIIEATGVANLLVAVKEPTIEVAQELFSHPRIKLLVVTGGEAVVAQARKVATMRLIAAGAGNPPVVVDETANIARAARSIYDGASFDNNIICADEKEIIAVDSIADQLKAEMKAIGAVEISLEQADAVARVVLRNYPQVEGGKAPNPNPKWVGRDAALIAKAAGIDVPDSCRLLIVDVKRDINHVFARVEQLMPVIPLLRAANVDEAIEWALILERGLSHTAGMHSRNIDNMDKMARAMNTSLFVKNGPHLAALGAGGEGWTTMTISTPTGEGVTCARSFVRLRRCCVVDNFRIV</sequence>
<evidence type="ECO:0000269" key="1">
    <source>
    </source>
</evidence>
<evidence type="ECO:0000303" key="2">
    <source>
    </source>
</evidence>
<evidence type="ECO:0000305" key="3"/>
<evidence type="ECO:0000305" key="4">
    <source>
    </source>
</evidence>
<evidence type="ECO:0000312" key="5">
    <source>
        <dbReference type="EMBL" id="EFV45545.1"/>
    </source>
</evidence>
<protein>
    <recommendedName>
        <fullName evidence="4">Acetaldehyde dehydrogenase (acetylating)</fullName>
        <ecNumber evidence="1">1.2.1.10</ecNumber>
    </recommendedName>
    <alternativeName>
        <fullName evidence="2">CoA-acylating acetaldehyde dehydrogenase</fullName>
    </alternativeName>
</protein>
<feature type="chain" id="PRO_0000450949" description="Acetaldehyde dehydrogenase (acetylating)">
    <location>
        <begin position="1"/>
        <end position="484"/>
    </location>
</feature>
<reference key="1">
    <citation type="submission" date="2013-04" db="EMBL/GenBank/DDBJ databases">
        <title>The Genome Sequence of Bilophila wadsworthia 3_1_6.</title>
        <authorList>
            <consortium name="The Broad Institute Genomics Platform"/>
            <person name="Earl A."/>
            <person name="Ward D."/>
            <person name="Feldgarden M."/>
            <person name="Gevers D."/>
            <person name="Sibley C."/>
            <person name="Strauss J."/>
            <person name="Allen-Vercoe E."/>
            <person name="Walker B."/>
            <person name="Young S."/>
            <person name="Zeng Q."/>
            <person name="Gargeya S."/>
            <person name="Fitzgerald M."/>
            <person name="Haas B."/>
            <person name="Abouelleil A."/>
            <person name="Allen A.W."/>
            <person name="Alvarado L."/>
            <person name="Arachchi H.M."/>
            <person name="Berlin A.M."/>
            <person name="Chapman S.B."/>
            <person name="Gainer-Dewar J."/>
            <person name="Goldberg J."/>
            <person name="Griggs A."/>
            <person name="Gujja S."/>
            <person name="Hansen M."/>
            <person name="Howarth C."/>
            <person name="Imamovic A."/>
            <person name="Ireland A."/>
            <person name="Larimer J."/>
            <person name="McCowan C."/>
            <person name="Murphy C."/>
            <person name="Pearson M."/>
            <person name="Poon T.W."/>
            <person name="Priest M."/>
            <person name="Roberts A."/>
            <person name="Saif S."/>
            <person name="Shea T."/>
            <person name="Sisk P."/>
            <person name="Sykes S."/>
            <person name="Wortman J."/>
            <person name="Nusbaum C."/>
            <person name="Birren B."/>
        </authorList>
    </citation>
    <scope>NUCLEOTIDE SEQUENCE [LARGE SCALE GENOMIC DNA]</scope>
    <source>
        <strain>3_1_6</strain>
    </source>
</reference>
<reference key="2">
    <citation type="journal article" date="2019" name="Proc. Natl. Acad. Sci. U.S.A.">
        <title>A glycyl radical enzyme enables hydrogen sulfide production by the human intestinal bacterium Bilophila wadsworthia.</title>
        <authorList>
            <person name="Peck S.C."/>
            <person name="Denger K."/>
            <person name="Burrichter A."/>
            <person name="Irwin S.M."/>
            <person name="Balskus E.P."/>
            <person name="Schleheck D."/>
        </authorList>
    </citation>
    <scope>FUNCTION</scope>
    <scope>CATALYTIC ACTIVITY</scope>
    <scope>INDUCTION</scope>
    <scope>PATHWAY</scope>
    <source>
        <strain>3_1_6</strain>
    </source>
</reference>
<name>ADHE_BILW3</name>
<gene>
    <name evidence="2" type="primary">adhE</name>
    <name evidence="5" type="ORF">HMPREF0179_00640</name>
</gene>
<comment type="function">
    <text evidence="1">Involved in an anaerobic respiration pathway that converts the sulfonate taurine (2-aminoethanesulfonate) to ammonia, acetate and sulfide. Catalyzes the oxidation of acetaldehyde to acetyl-CoA in the presence of CoASH and NAD(+). Highly prefers NAD(+) over NADP(+).</text>
</comment>
<comment type="catalytic activity">
    <reaction evidence="1">
        <text>acetaldehyde + NAD(+) + CoA = acetyl-CoA + NADH + H(+)</text>
        <dbReference type="Rhea" id="RHEA:23288"/>
        <dbReference type="ChEBI" id="CHEBI:15343"/>
        <dbReference type="ChEBI" id="CHEBI:15378"/>
        <dbReference type="ChEBI" id="CHEBI:57287"/>
        <dbReference type="ChEBI" id="CHEBI:57288"/>
        <dbReference type="ChEBI" id="CHEBI:57540"/>
        <dbReference type="ChEBI" id="CHEBI:57945"/>
        <dbReference type="EC" id="1.2.1.10"/>
    </reaction>
    <physiologicalReaction direction="left-to-right" evidence="4">
        <dbReference type="Rhea" id="RHEA:23289"/>
    </physiologicalReaction>
</comment>
<comment type="pathway">
    <text evidence="4">Organosulfur degradation; alkanesulfonate degradation.</text>
</comment>
<comment type="induction">
    <text evidence="1">Highly up-regulated in the presence of taurine or isethionate.</text>
</comment>
<comment type="miscellaneous">
    <text evidence="4">Taurine is an abundant dietary and host-derived molecule whose metabolism to hydrogen sulfide (H2S) by members of the human gut microbiota has many prominent connections to host health and disease. The human gut bacterium and opportunistic pathogen Bilophila wadsworthia produces H2S when respiring sulfite (HSO3-) released from organosulfonate substrates such as taurine and isethionate.</text>
</comment>
<comment type="similarity">
    <text evidence="3">Belongs to the aldehyde dehydrogenase family.</text>
</comment>
<proteinExistence type="evidence at protein level"/>
<accession>E5Y379</accession>